<feature type="chain" id="PRO_0000289938" description="Photosystem II reaction center protein T">
    <location>
        <begin position="1"/>
        <end position="35"/>
    </location>
</feature>
<feature type="transmembrane region" description="Helical" evidence="1">
    <location>
        <begin position="3"/>
        <end position="23"/>
    </location>
</feature>
<reference key="1">
    <citation type="journal article" date="2004" name="Plant Physiol.">
        <title>A comparison of rice chloroplast genomes.</title>
        <authorList>
            <person name="Tang J."/>
            <person name="Xia H."/>
            <person name="Cao M."/>
            <person name="Zhang X."/>
            <person name="Zeng W."/>
            <person name="Hu S."/>
            <person name="Tong W."/>
            <person name="Wang J."/>
            <person name="Wang J."/>
            <person name="Yu J."/>
            <person name="Yang H."/>
            <person name="Zhu L."/>
        </authorList>
    </citation>
    <scope>NUCLEOTIDE SEQUENCE [LARGE SCALE GENOMIC DNA]</scope>
    <source>
        <strain>cv. PA64s</strain>
    </source>
</reference>
<comment type="function">
    <text evidence="1">Found at the monomer-monomer interface of the photosystem II (PS II) dimer, plays a role in assembly and dimerization of PSII. PSII is a light-driven water plastoquinone oxidoreductase, using light energy to abstract electrons from H(2)O, generating a proton gradient subsequently used for ATP formation.</text>
</comment>
<comment type="subunit">
    <text evidence="1">PSII is composed of 1 copy each of membrane proteins PsbA, PsbB, PsbC, PsbD, PsbE, PsbF, PsbH, PsbI, PsbJ, PsbK, PsbL, PsbM, PsbT, PsbY, PsbZ, Psb30/Ycf12, at least 3 peripheral proteins of the oxygen-evolving complex and a large number of cofactors. It forms dimeric complexes.</text>
</comment>
<comment type="subcellular location">
    <subcellularLocation>
        <location evidence="1">Plastid</location>
        <location evidence="1">Chloroplast thylakoid membrane</location>
        <topology evidence="1">Single-pass membrane protein</topology>
    </subcellularLocation>
</comment>
<comment type="similarity">
    <text evidence="1 2">Belongs to the PsbT family.</text>
</comment>
<geneLocation type="chloroplast"/>
<name>PSBT_ORYSA</name>
<sequence>MEALVYTFLLVSTLGIIFFAIFFREPPKVPTKKVK</sequence>
<proteinExistence type="inferred from homology"/>
<accession>P0C427</accession>
<dbReference type="EMBL" id="AY522331">
    <property type="status" value="NOT_ANNOTATED_CDS"/>
    <property type="molecule type" value="Genomic_DNA"/>
</dbReference>
<dbReference type="SMR" id="P0C427"/>
<dbReference type="GO" id="GO:0009535">
    <property type="term" value="C:chloroplast thylakoid membrane"/>
    <property type="evidence" value="ECO:0007669"/>
    <property type="project" value="UniProtKB-SubCell"/>
</dbReference>
<dbReference type="GO" id="GO:0009539">
    <property type="term" value="C:photosystem II reaction center"/>
    <property type="evidence" value="ECO:0007669"/>
    <property type="project" value="InterPro"/>
</dbReference>
<dbReference type="GO" id="GO:0009536">
    <property type="term" value="C:plastid"/>
    <property type="evidence" value="ECO:0000305"/>
    <property type="project" value="Gramene"/>
</dbReference>
<dbReference type="GO" id="GO:0015979">
    <property type="term" value="P:photosynthesis"/>
    <property type="evidence" value="ECO:0007669"/>
    <property type="project" value="UniProtKB-UniRule"/>
</dbReference>
<dbReference type="HAMAP" id="MF_00808">
    <property type="entry name" value="PSII_PsbT"/>
    <property type="match status" value="1"/>
</dbReference>
<dbReference type="InterPro" id="IPR001743">
    <property type="entry name" value="PSII_PsbT"/>
</dbReference>
<dbReference type="InterPro" id="IPR037268">
    <property type="entry name" value="PSII_PsbT_sf"/>
</dbReference>
<dbReference type="PANTHER" id="PTHR36411">
    <property type="match status" value="1"/>
</dbReference>
<dbReference type="PANTHER" id="PTHR36411:SF2">
    <property type="entry name" value="PHOTOSYSTEM II REACTION CENTER PROTEIN T"/>
    <property type="match status" value="1"/>
</dbReference>
<dbReference type="Pfam" id="PF01405">
    <property type="entry name" value="PsbT"/>
    <property type="match status" value="1"/>
</dbReference>
<dbReference type="SUPFAM" id="SSF161029">
    <property type="entry name" value="Photosystem II reaction center protein T, PsbT"/>
    <property type="match status" value="1"/>
</dbReference>
<organism>
    <name type="scientific">Oryza sativa</name>
    <name type="common">Rice</name>
    <dbReference type="NCBI Taxonomy" id="4530"/>
    <lineage>
        <taxon>Eukaryota</taxon>
        <taxon>Viridiplantae</taxon>
        <taxon>Streptophyta</taxon>
        <taxon>Embryophyta</taxon>
        <taxon>Tracheophyta</taxon>
        <taxon>Spermatophyta</taxon>
        <taxon>Magnoliopsida</taxon>
        <taxon>Liliopsida</taxon>
        <taxon>Poales</taxon>
        <taxon>Poaceae</taxon>
        <taxon>BOP clade</taxon>
        <taxon>Oryzoideae</taxon>
        <taxon>Oryzeae</taxon>
        <taxon>Oryzinae</taxon>
        <taxon>Oryza</taxon>
    </lineage>
</organism>
<gene>
    <name evidence="1" type="primary">psbT</name>
</gene>
<evidence type="ECO:0000255" key="1">
    <source>
        <dbReference type="HAMAP-Rule" id="MF_00808"/>
    </source>
</evidence>
<evidence type="ECO:0000305" key="2"/>
<keyword id="KW-0150">Chloroplast</keyword>
<keyword id="KW-0472">Membrane</keyword>
<keyword id="KW-0602">Photosynthesis</keyword>
<keyword id="KW-0604">Photosystem II</keyword>
<keyword id="KW-0934">Plastid</keyword>
<keyword id="KW-0793">Thylakoid</keyword>
<keyword id="KW-0812">Transmembrane</keyword>
<keyword id="KW-1133">Transmembrane helix</keyword>
<protein>
    <recommendedName>
        <fullName evidence="1">Photosystem II reaction center protein T</fullName>
        <shortName evidence="1">PSII-T</shortName>
    </recommendedName>
</protein>